<accession>P77699</accession>
<accession>A0A385XJC6</accession>
<gene>
    <name type="primary">tfaD</name>
    <name type="synonym">ybcX</name>
    <name type="ordered locus">b0561</name>
</gene>
<evidence type="ECO:0000305" key="1"/>
<reference key="1">
    <citation type="submission" date="1997-01" db="EMBL/GenBank/DDBJ databases">
        <title>Sequence of minutes 4-25 of Escherichia coli.</title>
        <authorList>
            <person name="Chung E."/>
            <person name="Allen E."/>
            <person name="Araujo R."/>
            <person name="Aparicio A.M."/>
            <person name="Davis K."/>
            <person name="Duncan M."/>
            <person name="Federspiel N."/>
            <person name="Hyman R."/>
            <person name="Kalman S."/>
            <person name="Komp C."/>
            <person name="Kurdi O."/>
            <person name="Lew H."/>
            <person name="Lin D."/>
            <person name="Namath A."/>
            <person name="Oefner P."/>
            <person name="Roberts D."/>
            <person name="Schramm S."/>
            <person name="Davis R.W."/>
        </authorList>
    </citation>
    <scope>NUCLEOTIDE SEQUENCE [LARGE SCALE GENOMIC DNA]</scope>
    <source>
        <strain>K12 / MG1655 / ATCC 47076</strain>
    </source>
</reference>
<reference key="2">
    <citation type="journal article" date="1997" name="Science">
        <title>The complete genome sequence of Escherichia coli K-12.</title>
        <authorList>
            <person name="Blattner F.R."/>
            <person name="Plunkett G. III"/>
            <person name="Bloch C.A."/>
            <person name="Perna N.T."/>
            <person name="Burland V."/>
            <person name="Riley M."/>
            <person name="Collado-Vides J."/>
            <person name="Glasner J.D."/>
            <person name="Rode C.K."/>
            <person name="Mayhew G.F."/>
            <person name="Gregor J."/>
            <person name="Davis N.W."/>
            <person name="Kirkpatrick H.A."/>
            <person name="Goeden M.A."/>
            <person name="Rose D.J."/>
            <person name="Mau B."/>
            <person name="Shao Y."/>
        </authorList>
    </citation>
    <scope>NUCLEOTIDE SEQUENCE [LARGE SCALE GENOMIC DNA]</scope>
    <source>
        <strain>K12 / MG1655 / ATCC 47076</strain>
    </source>
</reference>
<proteinExistence type="inferred from homology"/>
<comment type="miscellaneous">
    <text evidence="1">Encoded by the cryptic lambdoid prophage DLP12.</text>
</comment>
<comment type="similarity">
    <text evidence="1">In the C-terminal section; belongs to the tfa family.</text>
</comment>
<comment type="sequence caution" evidence="1">
    <conflict type="erroneous initiation">
        <sequence resource="EMBL-CDS" id="AAB40757"/>
    </conflict>
    <text>Extended N-terminus.</text>
</comment>
<name>TFAD_ECOLI</name>
<dbReference type="EMBL" id="U82598">
    <property type="protein sequence ID" value="AAB40757.1"/>
    <property type="status" value="ALT_INIT"/>
    <property type="molecule type" value="Genomic_DNA"/>
</dbReference>
<dbReference type="EMBL" id="U00096">
    <property type="protein sequence ID" value="AYC08183.1"/>
    <property type="molecule type" value="Genomic_DNA"/>
</dbReference>
<dbReference type="PIR" id="G64788">
    <property type="entry name" value="G64788"/>
</dbReference>
<dbReference type="SMR" id="P77699"/>
<dbReference type="FunCoup" id="P77699">
    <property type="interactions" value="20"/>
</dbReference>
<dbReference type="EnsemblBacteria" id="AYC08183">
    <property type="protein sequence ID" value="AYC08183"/>
    <property type="gene ID" value="b0561"/>
</dbReference>
<dbReference type="EchoBASE" id="EB3404"/>
<dbReference type="InParanoid" id="P77699"/>
<dbReference type="BioCyc" id="EcoCyc:G6315-MONOMER"/>
<dbReference type="PRO" id="PR:P77699"/>
<dbReference type="Proteomes" id="UP000000625">
    <property type="component" value="Chromosome"/>
</dbReference>
<dbReference type="InterPro" id="IPR003458">
    <property type="entry name" value="Phage_T4_Gp38_tail_assem"/>
</dbReference>
<dbReference type="InterPro" id="IPR051220">
    <property type="entry name" value="TFA_Chaperone"/>
</dbReference>
<dbReference type="PANTHER" id="PTHR34413:SF2">
    <property type="entry name" value="PROPHAGE TAIL FIBER ASSEMBLY PROTEIN HOMOLOG TFAE-RELATED"/>
    <property type="match status" value="1"/>
</dbReference>
<dbReference type="PANTHER" id="PTHR34413">
    <property type="entry name" value="PROPHAGE TAIL FIBER ASSEMBLY PROTEIN HOMOLOG TFAE-RELATED-RELATED"/>
    <property type="match status" value="1"/>
</dbReference>
<dbReference type="Pfam" id="PF02413">
    <property type="entry name" value="Caudo_TAP"/>
    <property type="match status" value="1"/>
</dbReference>
<sequence>MNAMGSDYIREVNVVKSARVGYSKMLLGVYAYFIEHKQRNTLIPAGFVAVFNSDESSWHLVEDHRGKTVYDVASGDALFISELGPLPENVTWLSPEGEFQKWNGTAWVKDAEAEKLFRIREAEETKNSLMQVASEHIAPLQDAVDLEIATEEETSLLEAWKKYRVLLNRVDTSTAPDIEWPTNPVRE</sequence>
<organism>
    <name type="scientific">Escherichia coli (strain K12)</name>
    <dbReference type="NCBI Taxonomy" id="83333"/>
    <lineage>
        <taxon>Bacteria</taxon>
        <taxon>Pseudomonadati</taxon>
        <taxon>Pseudomonadota</taxon>
        <taxon>Gammaproteobacteria</taxon>
        <taxon>Enterobacterales</taxon>
        <taxon>Enterobacteriaceae</taxon>
        <taxon>Escherichia</taxon>
    </lineage>
</organism>
<feature type="chain" id="PRO_0000070304" description="Protein TfaD">
    <location>
        <begin position="1"/>
        <end position="187"/>
    </location>
</feature>
<protein>
    <recommendedName>
        <fullName evidence="1">Protein TfaD</fullName>
    </recommendedName>
    <alternativeName>
        <fullName>Tail fiber assembly protein homolog from lambdoid prophage DLP12</fullName>
    </alternativeName>
</protein>
<keyword id="KW-1185">Reference proteome</keyword>